<organism>
    <name type="scientific">Streptococcus pyogenes serotype M1</name>
    <dbReference type="NCBI Taxonomy" id="301447"/>
    <lineage>
        <taxon>Bacteria</taxon>
        <taxon>Bacillati</taxon>
        <taxon>Bacillota</taxon>
        <taxon>Bacilli</taxon>
        <taxon>Lactobacillales</taxon>
        <taxon>Streptococcaceae</taxon>
        <taxon>Streptococcus</taxon>
    </lineage>
</organism>
<proteinExistence type="inferred from homology"/>
<keyword id="KW-1185">Reference proteome</keyword>
<gene>
    <name type="ordered locus">SPy_1343</name>
    <name type="ordered locus">M5005_Spy1095</name>
</gene>
<feature type="chain" id="PRO_0000245620" description="UPF0371 protein SPy_1343/M5005_Spy1095">
    <location>
        <begin position="1"/>
        <end position="494"/>
    </location>
</feature>
<accession>Q99Z89</accession>
<accession>Q48Y59</accession>
<comment type="similarity">
    <text evidence="1">Belongs to the UPF0371 family.</text>
</comment>
<comment type="sequence caution" evidence="2">
    <conflict type="erroneous initiation">
        <sequence resource="EMBL-CDS" id="AAK34174"/>
    </conflict>
</comment>
<comment type="sequence caution" evidence="2">
    <conflict type="erroneous initiation">
        <sequence resource="EMBL-CDS" id="AAZ51713"/>
    </conflict>
</comment>
<name>Y1343_STRP1</name>
<protein>
    <recommendedName>
        <fullName evidence="1">UPF0371 protein SPy_1343/M5005_Spy1095</fullName>
    </recommendedName>
</protein>
<dbReference type="EMBL" id="AE004092">
    <property type="protein sequence ID" value="AAK34174.1"/>
    <property type="status" value="ALT_INIT"/>
    <property type="molecule type" value="Genomic_DNA"/>
</dbReference>
<dbReference type="EMBL" id="CP000017">
    <property type="protein sequence ID" value="AAZ51713.1"/>
    <property type="status" value="ALT_INIT"/>
    <property type="molecule type" value="Genomic_DNA"/>
</dbReference>
<dbReference type="RefSeq" id="NP_269453.1">
    <property type="nucleotide sequence ID" value="NC_002737.2"/>
</dbReference>
<dbReference type="SMR" id="Q99Z89"/>
<dbReference type="PaxDb" id="1314-HKU360_01075"/>
<dbReference type="KEGG" id="spy:SPy_1343"/>
<dbReference type="KEGG" id="spz:M5005_Spy1095"/>
<dbReference type="PATRIC" id="fig|160490.10.peg.1173"/>
<dbReference type="HOGENOM" id="CLU_046981_0_0_9"/>
<dbReference type="OMA" id="HPVNIAY"/>
<dbReference type="Proteomes" id="UP000000750">
    <property type="component" value="Chromosome"/>
</dbReference>
<dbReference type="Gene3D" id="1.20.1570.10">
    <property type="entry name" value="dip2346 domain like"/>
    <property type="match status" value="1"/>
</dbReference>
<dbReference type="Gene3D" id="3.10.630.10">
    <property type="entry name" value="dip2346 domain like"/>
    <property type="match status" value="1"/>
</dbReference>
<dbReference type="Gene3D" id="3.40.140.40">
    <property type="entry name" value="Domain of unknown function (DUF1846), C-terminal subdomain"/>
    <property type="match status" value="1"/>
</dbReference>
<dbReference type="HAMAP" id="MF_01567">
    <property type="entry name" value="UPF0371"/>
    <property type="match status" value="1"/>
</dbReference>
<dbReference type="InterPro" id="IPR014999">
    <property type="entry name" value="DUF1846"/>
</dbReference>
<dbReference type="InterPro" id="IPR048441">
    <property type="entry name" value="DUF1846_C"/>
</dbReference>
<dbReference type="InterPro" id="IPR048496">
    <property type="entry name" value="DUF1846_N"/>
</dbReference>
<dbReference type="NCBIfam" id="NF010184">
    <property type="entry name" value="PRK13663.1"/>
    <property type="match status" value="1"/>
</dbReference>
<dbReference type="Pfam" id="PF08903">
    <property type="entry name" value="DUF1846"/>
    <property type="match status" value="1"/>
</dbReference>
<dbReference type="Pfam" id="PF20921">
    <property type="entry name" value="DUF1846_C"/>
    <property type="match status" value="1"/>
</dbReference>
<dbReference type="PIRSF" id="PIRSF033132">
    <property type="entry name" value="DUF1846"/>
    <property type="match status" value="1"/>
</dbReference>
<evidence type="ECO:0000255" key="1">
    <source>
        <dbReference type="HAMAP-Rule" id="MF_01567"/>
    </source>
</evidence>
<evidence type="ECO:0000305" key="2"/>
<sequence length="494" mass="55359">MKTIAFDSNKYLNLQRDHILERISQFDGKLYMEFGGKMLEDYHAARVLPGYEPDNKIKLLKELKEQVEIVIAINANNIEHSKARGDLGISYDQEVFRLIDKFNTLDIYVGSVVITQYNNQPAADAFRKQLEKNGIASYLHYPIKGYPTDINHIISSEGMGKNNYIKTSRNLIVVTAPGPGSGKLATCMSQMYHDQINGVKSGYAKFETFPVWNLPLHHPVNLAYEAATADLDDVNMIDPFHLETYGKTAVNYNRDIEVFPVLNRTFERILSKSPYASPTDMGVNMVGFSIVNEEAAIEASKQEIIRRYYQTLVDFKAERVTESAVKKIELLMNDIGVTPDDRHVTVAAHQKAEQTGQPALALQLPNGQIVTGKTSELFGPTAAVIINAIKTLAKIDKTTHLIEPEYVKPIQGLKVNHLGSHNPRLHSNEILIALAITAMTSEEANLAMKELGNLKGSEAHSTVILTEEDKNVLRKLGVNITFDPVYQHHKLYRK</sequence>
<reference key="1">
    <citation type="journal article" date="2001" name="Proc. Natl. Acad. Sci. U.S.A.">
        <title>Complete genome sequence of an M1 strain of Streptococcus pyogenes.</title>
        <authorList>
            <person name="Ferretti J.J."/>
            <person name="McShan W.M."/>
            <person name="Ajdic D.J."/>
            <person name="Savic D.J."/>
            <person name="Savic G."/>
            <person name="Lyon K."/>
            <person name="Primeaux C."/>
            <person name="Sezate S."/>
            <person name="Suvorov A.N."/>
            <person name="Kenton S."/>
            <person name="Lai H.S."/>
            <person name="Lin S.P."/>
            <person name="Qian Y."/>
            <person name="Jia H.G."/>
            <person name="Najar F.Z."/>
            <person name="Ren Q."/>
            <person name="Zhu H."/>
            <person name="Song L."/>
            <person name="White J."/>
            <person name="Yuan X."/>
            <person name="Clifton S.W."/>
            <person name="Roe B.A."/>
            <person name="McLaughlin R.E."/>
        </authorList>
    </citation>
    <scope>NUCLEOTIDE SEQUENCE [LARGE SCALE GENOMIC DNA]</scope>
    <source>
        <strain>ATCC 700294 / SF370 / Serotype M1</strain>
    </source>
</reference>
<reference key="2">
    <citation type="journal article" date="2005" name="J. Infect. Dis.">
        <title>Evolutionary origin and emergence of a highly successful clone of serotype M1 group A Streptococcus involved multiple horizontal gene transfer events.</title>
        <authorList>
            <person name="Sumby P."/>
            <person name="Porcella S.F."/>
            <person name="Madrigal A.G."/>
            <person name="Barbian K.D."/>
            <person name="Virtaneva K."/>
            <person name="Ricklefs S.M."/>
            <person name="Sturdevant D.E."/>
            <person name="Graham M.R."/>
            <person name="Vuopio-Varkila J."/>
            <person name="Hoe N.P."/>
            <person name="Musser J.M."/>
        </authorList>
    </citation>
    <scope>NUCLEOTIDE SEQUENCE [LARGE SCALE GENOMIC DNA]</scope>
    <source>
        <strain>ATCC BAA-947 / MGAS5005 / Serotype M1</strain>
    </source>
</reference>